<proteinExistence type="inferred from homology"/>
<dbReference type="EMBL" id="CP000776">
    <property type="protein sequence ID" value="ABS51646.1"/>
    <property type="molecule type" value="Genomic_DNA"/>
</dbReference>
<dbReference type="RefSeq" id="WP_011991559.1">
    <property type="nucleotide sequence ID" value="NC_009714.1"/>
</dbReference>
<dbReference type="SMR" id="A7HZM1"/>
<dbReference type="STRING" id="360107.CHAB381_0099"/>
<dbReference type="KEGG" id="cha:CHAB381_0099"/>
<dbReference type="eggNOG" id="COG0097">
    <property type="taxonomic scope" value="Bacteria"/>
</dbReference>
<dbReference type="HOGENOM" id="CLU_065464_1_2_7"/>
<dbReference type="OrthoDB" id="9805007at2"/>
<dbReference type="Proteomes" id="UP000002407">
    <property type="component" value="Chromosome"/>
</dbReference>
<dbReference type="GO" id="GO:0022625">
    <property type="term" value="C:cytosolic large ribosomal subunit"/>
    <property type="evidence" value="ECO:0007669"/>
    <property type="project" value="TreeGrafter"/>
</dbReference>
<dbReference type="GO" id="GO:0019843">
    <property type="term" value="F:rRNA binding"/>
    <property type="evidence" value="ECO:0007669"/>
    <property type="project" value="UniProtKB-UniRule"/>
</dbReference>
<dbReference type="GO" id="GO:0003735">
    <property type="term" value="F:structural constituent of ribosome"/>
    <property type="evidence" value="ECO:0007669"/>
    <property type="project" value="InterPro"/>
</dbReference>
<dbReference type="GO" id="GO:0002181">
    <property type="term" value="P:cytoplasmic translation"/>
    <property type="evidence" value="ECO:0007669"/>
    <property type="project" value="TreeGrafter"/>
</dbReference>
<dbReference type="FunFam" id="3.90.930.12:FF:000001">
    <property type="entry name" value="50S ribosomal protein L6"/>
    <property type="match status" value="1"/>
</dbReference>
<dbReference type="Gene3D" id="3.90.930.12">
    <property type="entry name" value="Ribosomal protein L6, alpha-beta domain"/>
    <property type="match status" value="2"/>
</dbReference>
<dbReference type="HAMAP" id="MF_01365_B">
    <property type="entry name" value="Ribosomal_uL6_B"/>
    <property type="match status" value="1"/>
</dbReference>
<dbReference type="InterPro" id="IPR000702">
    <property type="entry name" value="Ribosomal_uL6-like"/>
</dbReference>
<dbReference type="InterPro" id="IPR036789">
    <property type="entry name" value="Ribosomal_uL6-like_a/b-dom_sf"/>
</dbReference>
<dbReference type="InterPro" id="IPR020040">
    <property type="entry name" value="Ribosomal_uL6_a/b-dom"/>
</dbReference>
<dbReference type="InterPro" id="IPR019906">
    <property type="entry name" value="Ribosomal_uL6_bac-type"/>
</dbReference>
<dbReference type="InterPro" id="IPR002358">
    <property type="entry name" value="Ribosomal_uL6_CS"/>
</dbReference>
<dbReference type="NCBIfam" id="TIGR03654">
    <property type="entry name" value="L6_bact"/>
    <property type="match status" value="1"/>
</dbReference>
<dbReference type="PANTHER" id="PTHR11655">
    <property type="entry name" value="60S/50S RIBOSOMAL PROTEIN L6/L9"/>
    <property type="match status" value="1"/>
</dbReference>
<dbReference type="PANTHER" id="PTHR11655:SF14">
    <property type="entry name" value="LARGE RIBOSOMAL SUBUNIT PROTEIN UL6M"/>
    <property type="match status" value="1"/>
</dbReference>
<dbReference type="Pfam" id="PF00347">
    <property type="entry name" value="Ribosomal_L6"/>
    <property type="match status" value="2"/>
</dbReference>
<dbReference type="PIRSF" id="PIRSF002162">
    <property type="entry name" value="Ribosomal_L6"/>
    <property type="match status" value="1"/>
</dbReference>
<dbReference type="PRINTS" id="PR00059">
    <property type="entry name" value="RIBOSOMALL6"/>
</dbReference>
<dbReference type="SUPFAM" id="SSF56053">
    <property type="entry name" value="Ribosomal protein L6"/>
    <property type="match status" value="2"/>
</dbReference>
<dbReference type="PROSITE" id="PS00525">
    <property type="entry name" value="RIBOSOMAL_L6_1"/>
    <property type="match status" value="1"/>
</dbReference>
<keyword id="KW-1185">Reference proteome</keyword>
<keyword id="KW-0687">Ribonucleoprotein</keyword>
<keyword id="KW-0689">Ribosomal protein</keyword>
<keyword id="KW-0694">RNA-binding</keyword>
<keyword id="KW-0699">rRNA-binding</keyword>
<evidence type="ECO:0000255" key="1">
    <source>
        <dbReference type="HAMAP-Rule" id="MF_01365"/>
    </source>
</evidence>
<evidence type="ECO:0000305" key="2"/>
<protein>
    <recommendedName>
        <fullName evidence="1">Large ribosomal subunit protein uL6</fullName>
    </recommendedName>
    <alternativeName>
        <fullName evidence="2">50S ribosomal protein L6</fullName>
    </alternativeName>
</protein>
<feature type="chain" id="PRO_1000055214" description="Large ribosomal subunit protein uL6">
    <location>
        <begin position="1"/>
        <end position="178"/>
    </location>
</feature>
<organism>
    <name type="scientific">Campylobacter hominis (strain ATCC BAA-381 / DSM 21671 / CCUG 45161 / LMG 19568 / NCTC 13146 / CH001A)</name>
    <dbReference type="NCBI Taxonomy" id="360107"/>
    <lineage>
        <taxon>Bacteria</taxon>
        <taxon>Pseudomonadati</taxon>
        <taxon>Campylobacterota</taxon>
        <taxon>Epsilonproteobacteria</taxon>
        <taxon>Campylobacterales</taxon>
        <taxon>Campylobacteraceae</taxon>
        <taxon>Campylobacter</taxon>
    </lineage>
</organism>
<gene>
    <name evidence="1" type="primary">rplF</name>
    <name type="ordered locus">CHAB381_0099</name>
</gene>
<accession>A7HZM1</accession>
<sequence>MSRIGKKPVAIPSGIEVKVDGNVLKFKKGNAQKELDTKNHVDVKVEDGKVEFSPKGEDRQSMAFWGTYRALAHNIVVGLTDGFSKQLEINGVGYKAAMKGKILELTLGYSHLVNYEVPDGIEISVDKNVITIKGTDKQQVGQVAAIIRDFRAPEPYKGKGVKYLEEHIIRKAGKTAKK</sequence>
<comment type="function">
    <text evidence="1">This protein binds to the 23S rRNA, and is important in its secondary structure. It is located near the subunit interface in the base of the L7/L12 stalk, and near the tRNA binding site of the peptidyltransferase center.</text>
</comment>
<comment type="subunit">
    <text evidence="1">Part of the 50S ribosomal subunit.</text>
</comment>
<comment type="similarity">
    <text evidence="1">Belongs to the universal ribosomal protein uL6 family.</text>
</comment>
<reference key="1">
    <citation type="submission" date="2007-07" db="EMBL/GenBank/DDBJ databases">
        <title>Complete genome sequence of Campylobacter hominis ATCC BAA-381, a commensal isolated from the human gastrointestinal tract.</title>
        <authorList>
            <person name="Fouts D.E."/>
            <person name="Mongodin E.F."/>
            <person name="Puiu D."/>
            <person name="Sebastian Y."/>
            <person name="Miller W.G."/>
            <person name="Mandrell R.E."/>
            <person name="Nelson K.E."/>
        </authorList>
    </citation>
    <scope>NUCLEOTIDE SEQUENCE [LARGE SCALE GENOMIC DNA]</scope>
    <source>
        <strain>ATCC BAA-381 / DSM 21671 / CCUG 45161 / LMG 19568 / NCTC 13146 / CH001A</strain>
    </source>
</reference>
<name>RL6_CAMHC</name>